<evidence type="ECO:0000250" key="1"/>
<evidence type="ECO:0000250" key="2">
    <source>
        <dbReference type="UniProtKB" id="Q2M2T7"/>
    </source>
</evidence>
<evidence type="ECO:0000305" key="3"/>
<name>RT24_MOUSE</name>
<dbReference type="EMBL" id="AK003117">
    <property type="protein sequence ID" value="BAB22577.1"/>
    <property type="molecule type" value="mRNA"/>
</dbReference>
<dbReference type="EMBL" id="AK007338">
    <property type="protein sequence ID" value="BAE43203.1"/>
    <property type="molecule type" value="mRNA"/>
</dbReference>
<dbReference type="EMBL" id="AK010590">
    <property type="protein sequence ID" value="BAB27047.1"/>
    <property type="molecule type" value="mRNA"/>
</dbReference>
<dbReference type="EMBL" id="AK014099">
    <property type="protein sequence ID" value="BAB29155.1"/>
    <property type="molecule type" value="mRNA"/>
</dbReference>
<dbReference type="EMBL" id="AL627069">
    <property type="status" value="NOT_ANNOTATED_CDS"/>
    <property type="molecule type" value="Genomic_DNA"/>
</dbReference>
<dbReference type="EMBL" id="BC029262">
    <property type="protein sequence ID" value="AAH29262.1"/>
    <property type="molecule type" value="mRNA"/>
</dbReference>
<dbReference type="CCDS" id="CCDS24402.1"/>
<dbReference type="RefSeq" id="NP_080356.1">
    <property type="nucleotide sequence ID" value="NM_026080.3"/>
</dbReference>
<dbReference type="PDB" id="7PNT">
    <property type="method" value="EM"/>
    <property type="resolution" value="3.19 A"/>
    <property type="chains" value="C=1-167"/>
</dbReference>
<dbReference type="PDB" id="7PNU">
    <property type="method" value="EM"/>
    <property type="resolution" value="3.06 A"/>
    <property type="chains" value="C=1-167"/>
</dbReference>
<dbReference type="PDB" id="7PNV">
    <property type="method" value="EM"/>
    <property type="resolution" value="3.06 A"/>
    <property type="chains" value="C=1-167"/>
</dbReference>
<dbReference type="PDB" id="7PNW">
    <property type="method" value="EM"/>
    <property type="resolution" value="3.09 A"/>
    <property type="chains" value="C=1-167"/>
</dbReference>
<dbReference type="PDBsum" id="7PNT"/>
<dbReference type="PDBsum" id="7PNU"/>
<dbReference type="PDBsum" id="7PNV"/>
<dbReference type="PDBsum" id="7PNW"/>
<dbReference type="EMDB" id="EMD-13551"/>
<dbReference type="EMDB" id="EMD-13552"/>
<dbReference type="EMDB" id="EMD-13553"/>
<dbReference type="EMDB" id="EMD-13554"/>
<dbReference type="SMR" id="Q9CQV5"/>
<dbReference type="BioGRID" id="211096">
    <property type="interactions" value="3"/>
</dbReference>
<dbReference type="ComplexPortal" id="CPX-5301">
    <property type="entry name" value="28S mitochondrial small ribosomal subunit"/>
</dbReference>
<dbReference type="FunCoup" id="Q9CQV5">
    <property type="interactions" value="792"/>
</dbReference>
<dbReference type="STRING" id="10090.ENSMUSP00000119535"/>
<dbReference type="iPTMnet" id="Q9CQV5"/>
<dbReference type="PhosphoSitePlus" id="Q9CQV5"/>
<dbReference type="SwissPalm" id="Q9CQV5"/>
<dbReference type="PaxDb" id="10090-ENSMUSP00000119535"/>
<dbReference type="PeptideAtlas" id="Q9CQV5"/>
<dbReference type="ProteomicsDB" id="260741"/>
<dbReference type="Pumba" id="Q9CQV5"/>
<dbReference type="Antibodypedia" id="44496">
    <property type="antibodies" value="112 antibodies from 24 providers"/>
</dbReference>
<dbReference type="DNASU" id="64660"/>
<dbReference type="Ensembl" id="ENSMUST00000154330.2">
    <property type="protein sequence ID" value="ENSMUSP00000119535.2"/>
    <property type="gene ID" value="ENSMUSG00000020477.11"/>
</dbReference>
<dbReference type="GeneID" id="64660"/>
<dbReference type="KEGG" id="mmu:64660"/>
<dbReference type="UCSC" id="uc007hwt.1">
    <property type="organism name" value="mouse"/>
</dbReference>
<dbReference type="AGR" id="MGI:1928142"/>
<dbReference type="CTD" id="64951"/>
<dbReference type="MGI" id="MGI:1928142">
    <property type="gene designation" value="Mrps24"/>
</dbReference>
<dbReference type="VEuPathDB" id="HostDB:ENSMUSG00000020477"/>
<dbReference type="eggNOG" id="ENOG502RXU1">
    <property type="taxonomic scope" value="Eukaryota"/>
</dbReference>
<dbReference type="GeneTree" id="ENSGT00390000011179"/>
<dbReference type="HOGENOM" id="CLU_134150_0_0_1"/>
<dbReference type="InParanoid" id="Q9CQV5"/>
<dbReference type="OMA" id="FLQGYTE"/>
<dbReference type="OrthoDB" id="5950413at2759"/>
<dbReference type="PhylomeDB" id="Q9CQV5"/>
<dbReference type="TreeFam" id="TF324311"/>
<dbReference type="Reactome" id="R-MMU-5389840">
    <property type="pathway name" value="Mitochondrial translation elongation"/>
</dbReference>
<dbReference type="Reactome" id="R-MMU-5419276">
    <property type="pathway name" value="Mitochondrial translation termination"/>
</dbReference>
<dbReference type="BioGRID-ORCS" id="64660">
    <property type="hits" value="24 hits in 80 CRISPR screens"/>
</dbReference>
<dbReference type="ChiTaRS" id="Mrps24">
    <property type="organism name" value="mouse"/>
</dbReference>
<dbReference type="PRO" id="PR:Q9CQV5"/>
<dbReference type="Proteomes" id="UP000000589">
    <property type="component" value="Chromosome 11"/>
</dbReference>
<dbReference type="RNAct" id="Q9CQV5">
    <property type="molecule type" value="protein"/>
</dbReference>
<dbReference type="Bgee" id="ENSMUSG00000020477">
    <property type="expression patterns" value="Expressed in endocardial cushion and 257 other cell types or tissues"/>
</dbReference>
<dbReference type="GO" id="GO:0005743">
    <property type="term" value="C:mitochondrial inner membrane"/>
    <property type="evidence" value="ECO:0000303"/>
    <property type="project" value="ComplexPortal"/>
</dbReference>
<dbReference type="GO" id="GO:0005763">
    <property type="term" value="C:mitochondrial small ribosomal subunit"/>
    <property type="evidence" value="ECO:0000250"/>
    <property type="project" value="UniProtKB"/>
</dbReference>
<dbReference type="GO" id="GO:0005739">
    <property type="term" value="C:mitochondrion"/>
    <property type="evidence" value="ECO:0007005"/>
    <property type="project" value="MGI"/>
</dbReference>
<dbReference type="GO" id="GO:0003735">
    <property type="term" value="F:structural constituent of ribosome"/>
    <property type="evidence" value="ECO:0000250"/>
    <property type="project" value="UniProtKB"/>
</dbReference>
<dbReference type="GO" id="GO:0032543">
    <property type="term" value="P:mitochondrial translation"/>
    <property type="evidence" value="ECO:0000250"/>
    <property type="project" value="UniProtKB"/>
</dbReference>
<dbReference type="InterPro" id="IPR026146">
    <property type="entry name" value="Ribosomal_uS3m"/>
</dbReference>
<dbReference type="PANTHER" id="PTHR21244">
    <property type="entry name" value="MITOCHONDRIAL 28S RIBOSOMAL PROTEIN S24"/>
    <property type="match status" value="1"/>
</dbReference>
<dbReference type="PANTHER" id="PTHR21244:SF1">
    <property type="entry name" value="SMALL RIBOSOMAL SUBUNIT PROTEIN US3M"/>
    <property type="match status" value="1"/>
</dbReference>
<dbReference type="Pfam" id="PF14955">
    <property type="entry name" value="MRP-S24"/>
    <property type="match status" value="1"/>
</dbReference>
<feature type="transit peptide" description="Mitochondrion" evidence="1">
    <location>
        <begin position="1"/>
        <end position="35"/>
    </location>
</feature>
<feature type="chain" id="PRO_0000273067" description="Small ribosomal subunit protein uS3m">
    <location>
        <begin position="36"/>
        <end position="167"/>
    </location>
</feature>
<comment type="subunit">
    <text evidence="2">Component of the mitochondrial ribosome small subunit (28S) which comprises a 12S rRNA and about 30 distinct proteins.</text>
</comment>
<comment type="subcellular location">
    <subcellularLocation>
        <location evidence="2">Mitochondrion</location>
    </subcellularLocation>
</comment>
<comment type="similarity">
    <text evidence="3">Belongs to the universal ribosomal protein uS3 family.</text>
</comment>
<keyword id="KW-0002">3D-structure</keyword>
<keyword id="KW-0496">Mitochondrion</keyword>
<keyword id="KW-1185">Reference proteome</keyword>
<keyword id="KW-0687">Ribonucleoprotein</keyword>
<keyword id="KW-0689">Ribosomal protein</keyword>
<keyword id="KW-0809">Transit peptide</keyword>
<proteinExistence type="evidence at protein level"/>
<organism>
    <name type="scientific">Mus musculus</name>
    <name type="common">Mouse</name>
    <dbReference type="NCBI Taxonomy" id="10090"/>
    <lineage>
        <taxon>Eukaryota</taxon>
        <taxon>Metazoa</taxon>
        <taxon>Chordata</taxon>
        <taxon>Craniata</taxon>
        <taxon>Vertebrata</taxon>
        <taxon>Euteleostomi</taxon>
        <taxon>Mammalia</taxon>
        <taxon>Eutheria</taxon>
        <taxon>Euarchontoglires</taxon>
        <taxon>Glires</taxon>
        <taxon>Rodentia</taxon>
        <taxon>Myomorpha</taxon>
        <taxon>Muroidea</taxon>
        <taxon>Muridae</taxon>
        <taxon>Murinae</taxon>
        <taxon>Mus</taxon>
        <taxon>Mus</taxon>
    </lineage>
</organism>
<protein>
    <recommendedName>
        <fullName evidence="3">Small ribosomal subunit protein uS3m</fullName>
    </recommendedName>
    <alternativeName>
        <fullName>28S ribosomal protein S24, mitochondrial</fullName>
        <shortName>MRP-S24</shortName>
        <shortName>S24mt</shortName>
    </alternativeName>
</protein>
<reference key="1">
    <citation type="journal article" date="2005" name="Science">
        <title>The transcriptional landscape of the mammalian genome.</title>
        <authorList>
            <person name="Carninci P."/>
            <person name="Kasukawa T."/>
            <person name="Katayama S."/>
            <person name="Gough J."/>
            <person name="Frith M.C."/>
            <person name="Maeda N."/>
            <person name="Oyama R."/>
            <person name="Ravasi T."/>
            <person name="Lenhard B."/>
            <person name="Wells C."/>
            <person name="Kodzius R."/>
            <person name="Shimokawa K."/>
            <person name="Bajic V.B."/>
            <person name="Brenner S.E."/>
            <person name="Batalov S."/>
            <person name="Forrest A.R."/>
            <person name="Zavolan M."/>
            <person name="Davis M.J."/>
            <person name="Wilming L.G."/>
            <person name="Aidinis V."/>
            <person name="Allen J.E."/>
            <person name="Ambesi-Impiombato A."/>
            <person name="Apweiler R."/>
            <person name="Aturaliya R.N."/>
            <person name="Bailey T.L."/>
            <person name="Bansal M."/>
            <person name="Baxter L."/>
            <person name="Beisel K.W."/>
            <person name="Bersano T."/>
            <person name="Bono H."/>
            <person name="Chalk A.M."/>
            <person name="Chiu K.P."/>
            <person name="Choudhary V."/>
            <person name="Christoffels A."/>
            <person name="Clutterbuck D.R."/>
            <person name="Crowe M.L."/>
            <person name="Dalla E."/>
            <person name="Dalrymple B.P."/>
            <person name="de Bono B."/>
            <person name="Della Gatta G."/>
            <person name="di Bernardo D."/>
            <person name="Down T."/>
            <person name="Engstrom P."/>
            <person name="Fagiolini M."/>
            <person name="Faulkner G."/>
            <person name="Fletcher C.F."/>
            <person name="Fukushima T."/>
            <person name="Furuno M."/>
            <person name="Futaki S."/>
            <person name="Gariboldi M."/>
            <person name="Georgii-Hemming P."/>
            <person name="Gingeras T.R."/>
            <person name="Gojobori T."/>
            <person name="Green R.E."/>
            <person name="Gustincich S."/>
            <person name="Harbers M."/>
            <person name="Hayashi Y."/>
            <person name="Hensch T.K."/>
            <person name="Hirokawa N."/>
            <person name="Hill D."/>
            <person name="Huminiecki L."/>
            <person name="Iacono M."/>
            <person name="Ikeo K."/>
            <person name="Iwama A."/>
            <person name="Ishikawa T."/>
            <person name="Jakt M."/>
            <person name="Kanapin A."/>
            <person name="Katoh M."/>
            <person name="Kawasawa Y."/>
            <person name="Kelso J."/>
            <person name="Kitamura H."/>
            <person name="Kitano H."/>
            <person name="Kollias G."/>
            <person name="Krishnan S.P."/>
            <person name="Kruger A."/>
            <person name="Kummerfeld S.K."/>
            <person name="Kurochkin I.V."/>
            <person name="Lareau L.F."/>
            <person name="Lazarevic D."/>
            <person name="Lipovich L."/>
            <person name="Liu J."/>
            <person name="Liuni S."/>
            <person name="McWilliam S."/>
            <person name="Madan Babu M."/>
            <person name="Madera M."/>
            <person name="Marchionni L."/>
            <person name="Matsuda H."/>
            <person name="Matsuzawa S."/>
            <person name="Miki H."/>
            <person name="Mignone F."/>
            <person name="Miyake S."/>
            <person name="Morris K."/>
            <person name="Mottagui-Tabar S."/>
            <person name="Mulder N."/>
            <person name="Nakano N."/>
            <person name="Nakauchi H."/>
            <person name="Ng P."/>
            <person name="Nilsson R."/>
            <person name="Nishiguchi S."/>
            <person name="Nishikawa S."/>
            <person name="Nori F."/>
            <person name="Ohara O."/>
            <person name="Okazaki Y."/>
            <person name="Orlando V."/>
            <person name="Pang K.C."/>
            <person name="Pavan W.J."/>
            <person name="Pavesi G."/>
            <person name="Pesole G."/>
            <person name="Petrovsky N."/>
            <person name="Piazza S."/>
            <person name="Reed J."/>
            <person name="Reid J.F."/>
            <person name="Ring B.Z."/>
            <person name="Ringwald M."/>
            <person name="Rost B."/>
            <person name="Ruan Y."/>
            <person name="Salzberg S.L."/>
            <person name="Sandelin A."/>
            <person name="Schneider C."/>
            <person name="Schoenbach C."/>
            <person name="Sekiguchi K."/>
            <person name="Semple C.A."/>
            <person name="Seno S."/>
            <person name="Sessa L."/>
            <person name="Sheng Y."/>
            <person name="Shibata Y."/>
            <person name="Shimada H."/>
            <person name="Shimada K."/>
            <person name="Silva D."/>
            <person name="Sinclair B."/>
            <person name="Sperling S."/>
            <person name="Stupka E."/>
            <person name="Sugiura K."/>
            <person name="Sultana R."/>
            <person name="Takenaka Y."/>
            <person name="Taki K."/>
            <person name="Tammoja K."/>
            <person name="Tan S.L."/>
            <person name="Tang S."/>
            <person name="Taylor M.S."/>
            <person name="Tegner J."/>
            <person name="Teichmann S.A."/>
            <person name="Ueda H.R."/>
            <person name="van Nimwegen E."/>
            <person name="Verardo R."/>
            <person name="Wei C.L."/>
            <person name="Yagi K."/>
            <person name="Yamanishi H."/>
            <person name="Zabarovsky E."/>
            <person name="Zhu S."/>
            <person name="Zimmer A."/>
            <person name="Hide W."/>
            <person name="Bult C."/>
            <person name="Grimmond S.M."/>
            <person name="Teasdale R.D."/>
            <person name="Liu E.T."/>
            <person name="Brusic V."/>
            <person name="Quackenbush J."/>
            <person name="Wahlestedt C."/>
            <person name="Mattick J.S."/>
            <person name="Hume D.A."/>
            <person name="Kai C."/>
            <person name="Sasaki D."/>
            <person name="Tomaru Y."/>
            <person name="Fukuda S."/>
            <person name="Kanamori-Katayama M."/>
            <person name="Suzuki M."/>
            <person name="Aoki J."/>
            <person name="Arakawa T."/>
            <person name="Iida J."/>
            <person name="Imamura K."/>
            <person name="Itoh M."/>
            <person name="Kato T."/>
            <person name="Kawaji H."/>
            <person name="Kawagashira N."/>
            <person name="Kawashima T."/>
            <person name="Kojima M."/>
            <person name="Kondo S."/>
            <person name="Konno H."/>
            <person name="Nakano K."/>
            <person name="Ninomiya N."/>
            <person name="Nishio T."/>
            <person name="Okada M."/>
            <person name="Plessy C."/>
            <person name="Shibata K."/>
            <person name="Shiraki T."/>
            <person name="Suzuki S."/>
            <person name="Tagami M."/>
            <person name="Waki K."/>
            <person name="Watahiki A."/>
            <person name="Okamura-Oho Y."/>
            <person name="Suzuki H."/>
            <person name="Kawai J."/>
            <person name="Hayashizaki Y."/>
        </authorList>
    </citation>
    <scope>NUCLEOTIDE SEQUENCE [LARGE SCALE MRNA]</scope>
    <source>
        <strain>C57BL/6J</strain>
        <tissue>Head</tissue>
        <tissue>Heart</tissue>
        <tissue>Pancreas</tissue>
    </source>
</reference>
<reference key="2">
    <citation type="journal article" date="2009" name="PLoS Biol.">
        <title>Lineage-specific biology revealed by a finished genome assembly of the mouse.</title>
        <authorList>
            <person name="Church D.M."/>
            <person name="Goodstadt L."/>
            <person name="Hillier L.W."/>
            <person name="Zody M.C."/>
            <person name="Goldstein S."/>
            <person name="She X."/>
            <person name="Bult C.J."/>
            <person name="Agarwala R."/>
            <person name="Cherry J.L."/>
            <person name="DiCuccio M."/>
            <person name="Hlavina W."/>
            <person name="Kapustin Y."/>
            <person name="Meric P."/>
            <person name="Maglott D."/>
            <person name="Birtle Z."/>
            <person name="Marques A.C."/>
            <person name="Graves T."/>
            <person name="Zhou S."/>
            <person name="Teague B."/>
            <person name="Potamousis K."/>
            <person name="Churas C."/>
            <person name="Place M."/>
            <person name="Herschleb J."/>
            <person name="Runnheim R."/>
            <person name="Forrest D."/>
            <person name="Amos-Landgraf J."/>
            <person name="Schwartz D.C."/>
            <person name="Cheng Z."/>
            <person name="Lindblad-Toh K."/>
            <person name="Eichler E.E."/>
            <person name="Ponting C.P."/>
        </authorList>
    </citation>
    <scope>NUCLEOTIDE SEQUENCE [LARGE SCALE GENOMIC DNA]</scope>
    <source>
        <strain>C57BL/6J</strain>
    </source>
</reference>
<reference key="3">
    <citation type="journal article" date="2004" name="Genome Res.">
        <title>The status, quality, and expansion of the NIH full-length cDNA project: the Mammalian Gene Collection (MGC).</title>
        <authorList>
            <consortium name="The MGC Project Team"/>
        </authorList>
    </citation>
    <scope>NUCLEOTIDE SEQUENCE [LARGE SCALE MRNA]</scope>
    <source>
        <strain>FVB/N</strain>
        <tissue>Salivary gland</tissue>
    </source>
</reference>
<reference key="4">
    <citation type="journal article" date="2010" name="Cell">
        <title>A tissue-specific atlas of mouse protein phosphorylation and expression.</title>
        <authorList>
            <person name="Huttlin E.L."/>
            <person name="Jedrychowski M.P."/>
            <person name="Elias J.E."/>
            <person name="Goswami T."/>
            <person name="Rad R."/>
            <person name="Beausoleil S.A."/>
            <person name="Villen J."/>
            <person name="Haas W."/>
            <person name="Sowa M.E."/>
            <person name="Gygi S.P."/>
        </authorList>
    </citation>
    <scope>IDENTIFICATION BY MASS SPECTROMETRY [LARGE SCALE ANALYSIS]</scope>
    <source>
        <tissue>Heart</tissue>
        <tissue>Kidney</tissue>
        <tissue>Liver</tissue>
        <tissue>Pancreas</tissue>
        <tissue>Testis</tissue>
    </source>
</reference>
<sequence>MAWSASVRGLGQRVLACSRELPGAWRTLHTSAVCAKNRAARVRVAKGNKPVSYEEAHAPHYIAHRKGWLSLHTGNLDGEDHAAERTLEDVFLRKFMMGTFPGCLADQIVLKRRANQVDICALVLRQLPAHKFYFLVGYSETLLSHFYKCPVRLHLQTVPSKVVYKYI</sequence>
<gene>
    <name type="primary">Mrps24</name>
</gene>
<accession>Q9CQV5</accession>